<protein>
    <recommendedName>
        <fullName evidence="1">3-methyl-2-oxobutanoate hydroxymethyltransferase</fullName>
        <ecNumber evidence="1">2.1.2.11</ecNumber>
    </recommendedName>
    <alternativeName>
        <fullName evidence="1">Ketopantoate hydroxymethyltransferase</fullName>
        <shortName evidence="1">KPHMT</shortName>
    </alternativeName>
</protein>
<reference key="1">
    <citation type="journal article" date="2011" name="J. Bacteriol.">
        <title>Genome sequence of Thermotoga sp. strain RQ2, a hyperthermophilic bacterium isolated from a geothermally heated region of the seafloor near Ribeira Quente, the Azores.</title>
        <authorList>
            <person name="Swithers K.S."/>
            <person name="DiPippo J.L."/>
            <person name="Bruce D.C."/>
            <person name="Detter C."/>
            <person name="Tapia R."/>
            <person name="Han S."/>
            <person name="Saunders E."/>
            <person name="Goodwin L.A."/>
            <person name="Han J."/>
            <person name="Woyke T."/>
            <person name="Pitluck S."/>
            <person name="Pennacchio L."/>
            <person name="Nolan M."/>
            <person name="Mikhailova N."/>
            <person name="Lykidis A."/>
            <person name="Land M.L."/>
            <person name="Brettin T."/>
            <person name="Stetter K.O."/>
            <person name="Nelson K.E."/>
            <person name="Gogarten J.P."/>
            <person name="Noll K.M."/>
        </authorList>
    </citation>
    <scope>NUCLEOTIDE SEQUENCE [LARGE SCALE GENOMIC DNA]</scope>
    <source>
        <strain>RQ2</strain>
    </source>
</reference>
<keyword id="KW-0963">Cytoplasm</keyword>
<keyword id="KW-0460">Magnesium</keyword>
<keyword id="KW-0479">Metal-binding</keyword>
<keyword id="KW-0566">Pantothenate biosynthesis</keyword>
<keyword id="KW-0808">Transferase</keyword>
<accession>B1LAU5</accession>
<organism>
    <name type="scientific">Thermotoga sp. (strain RQ2)</name>
    <dbReference type="NCBI Taxonomy" id="126740"/>
    <lineage>
        <taxon>Bacteria</taxon>
        <taxon>Thermotogati</taxon>
        <taxon>Thermotogota</taxon>
        <taxon>Thermotogae</taxon>
        <taxon>Thermotogales</taxon>
        <taxon>Thermotogaceae</taxon>
        <taxon>Thermotoga</taxon>
    </lineage>
</organism>
<feature type="chain" id="PRO_1000097015" description="3-methyl-2-oxobutanoate hydroxymethyltransferase">
    <location>
        <begin position="1"/>
        <end position="270"/>
    </location>
</feature>
<feature type="active site" description="Proton acceptor" evidence="1">
    <location>
        <position position="178"/>
    </location>
</feature>
<feature type="binding site" evidence="1">
    <location>
        <begin position="41"/>
        <end position="42"/>
    </location>
    <ligand>
        <name>3-methyl-2-oxobutanoate</name>
        <dbReference type="ChEBI" id="CHEBI:11851"/>
    </ligand>
</feature>
<feature type="binding site" evidence="1">
    <location>
        <position position="41"/>
    </location>
    <ligand>
        <name>Mg(2+)</name>
        <dbReference type="ChEBI" id="CHEBI:18420"/>
    </ligand>
</feature>
<feature type="binding site" evidence="1">
    <location>
        <position position="80"/>
    </location>
    <ligand>
        <name>3-methyl-2-oxobutanoate</name>
        <dbReference type="ChEBI" id="CHEBI:11851"/>
    </ligand>
</feature>
<feature type="binding site" evidence="1">
    <location>
        <position position="80"/>
    </location>
    <ligand>
        <name>Mg(2+)</name>
        <dbReference type="ChEBI" id="CHEBI:18420"/>
    </ligand>
</feature>
<feature type="binding site" evidence="1">
    <location>
        <position position="109"/>
    </location>
    <ligand>
        <name>3-methyl-2-oxobutanoate</name>
        <dbReference type="ChEBI" id="CHEBI:11851"/>
    </ligand>
</feature>
<feature type="binding site" evidence="1">
    <location>
        <position position="111"/>
    </location>
    <ligand>
        <name>Mg(2+)</name>
        <dbReference type="ChEBI" id="CHEBI:18420"/>
    </ligand>
</feature>
<name>PANB_THESQ</name>
<sequence length="270" mass="29692">MNVEKLKKMKGKEKIVMVTAYDAPSARIARDAGIDVILVGDSLGNNVLGYENTIPVTMEEMLIHVAAVKRGAPDAFIVADMPFLSYQTSVEKAVENAGKFLKVGANAVKIEGGEEFGELVQKLVESGIPVMGHIGLTPQFVNRFGGYRVQGKTEKNREYLLRSARELEKRGAFAIVLELVVEEVAKEITESVSIPTIGIGSGRFCDGQVLVWHDLLGLNPDFAPRFSKKYANLYEVILKALQEFRREVKEGLFPTEEHSFTDKSKGGVSS</sequence>
<gene>
    <name evidence="1" type="primary">panB</name>
    <name type="ordered locus">TRQ2_1097</name>
</gene>
<proteinExistence type="inferred from homology"/>
<evidence type="ECO:0000255" key="1">
    <source>
        <dbReference type="HAMAP-Rule" id="MF_00156"/>
    </source>
</evidence>
<dbReference type="EC" id="2.1.2.11" evidence="1"/>
<dbReference type="EMBL" id="CP000969">
    <property type="protein sequence ID" value="ACB09443.1"/>
    <property type="molecule type" value="Genomic_DNA"/>
</dbReference>
<dbReference type="RefSeq" id="WP_012310933.1">
    <property type="nucleotide sequence ID" value="NC_010483.1"/>
</dbReference>
<dbReference type="SMR" id="B1LAU5"/>
<dbReference type="KEGG" id="trq:TRQ2_1097"/>
<dbReference type="HOGENOM" id="CLU_036645_1_0_0"/>
<dbReference type="UniPathway" id="UPA00028">
    <property type="reaction ID" value="UER00003"/>
</dbReference>
<dbReference type="Proteomes" id="UP000001687">
    <property type="component" value="Chromosome"/>
</dbReference>
<dbReference type="GO" id="GO:0005737">
    <property type="term" value="C:cytoplasm"/>
    <property type="evidence" value="ECO:0007669"/>
    <property type="project" value="UniProtKB-SubCell"/>
</dbReference>
<dbReference type="GO" id="GO:0003864">
    <property type="term" value="F:3-methyl-2-oxobutanoate hydroxymethyltransferase activity"/>
    <property type="evidence" value="ECO:0007669"/>
    <property type="project" value="UniProtKB-UniRule"/>
</dbReference>
<dbReference type="GO" id="GO:0000287">
    <property type="term" value="F:magnesium ion binding"/>
    <property type="evidence" value="ECO:0007669"/>
    <property type="project" value="TreeGrafter"/>
</dbReference>
<dbReference type="GO" id="GO:0015940">
    <property type="term" value="P:pantothenate biosynthetic process"/>
    <property type="evidence" value="ECO:0007669"/>
    <property type="project" value="UniProtKB-UniRule"/>
</dbReference>
<dbReference type="CDD" id="cd06557">
    <property type="entry name" value="KPHMT-like"/>
    <property type="match status" value="1"/>
</dbReference>
<dbReference type="FunFam" id="3.20.20.60:FF:000003">
    <property type="entry name" value="3-methyl-2-oxobutanoate hydroxymethyltransferase"/>
    <property type="match status" value="1"/>
</dbReference>
<dbReference type="Gene3D" id="3.20.20.60">
    <property type="entry name" value="Phosphoenolpyruvate-binding domains"/>
    <property type="match status" value="1"/>
</dbReference>
<dbReference type="HAMAP" id="MF_00156">
    <property type="entry name" value="PanB"/>
    <property type="match status" value="1"/>
</dbReference>
<dbReference type="InterPro" id="IPR003700">
    <property type="entry name" value="Pantoate_hydroxy_MeTrfase"/>
</dbReference>
<dbReference type="InterPro" id="IPR015813">
    <property type="entry name" value="Pyrv/PenolPyrv_kinase-like_dom"/>
</dbReference>
<dbReference type="InterPro" id="IPR040442">
    <property type="entry name" value="Pyrv_kinase-like_dom_sf"/>
</dbReference>
<dbReference type="NCBIfam" id="TIGR00222">
    <property type="entry name" value="panB"/>
    <property type="match status" value="1"/>
</dbReference>
<dbReference type="NCBIfam" id="NF001452">
    <property type="entry name" value="PRK00311.1"/>
    <property type="match status" value="1"/>
</dbReference>
<dbReference type="PANTHER" id="PTHR20881">
    <property type="entry name" value="3-METHYL-2-OXOBUTANOATE HYDROXYMETHYLTRANSFERASE"/>
    <property type="match status" value="1"/>
</dbReference>
<dbReference type="PANTHER" id="PTHR20881:SF0">
    <property type="entry name" value="3-METHYL-2-OXOBUTANOATE HYDROXYMETHYLTRANSFERASE"/>
    <property type="match status" value="1"/>
</dbReference>
<dbReference type="Pfam" id="PF02548">
    <property type="entry name" value="Pantoate_transf"/>
    <property type="match status" value="1"/>
</dbReference>
<dbReference type="PIRSF" id="PIRSF000388">
    <property type="entry name" value="Pantoate_hydroxy_MeTrfase"/>
    <property type="match status" value="1"/>
</dbReference>
<dbReference type="SUPFAM" id="SSF51621">
    <property type="entry name" value="Phosphoenolpyruvate/pyruvate domain"/>
    <property type="match status" value="1"/>
</dbReference>
<comment type="function">
    <text evidence="1">Catalyzes the reversible reaction in which hydroxymethyl group from 5,10-methylenetetrahydrofolate is transferred onto alpha-ketoisovalerate to form ketopantoate.</text>
</comment>
<comment type="catalytic activity">
    <reaction evidence="1">
        <text>3-methyl-2-oxobutanoate + (6R)-5,10-methylene-5,6,7,8-tetrahydrofolate + H2O = 2-dehydropantoate + (6S)-5,6,7,8-tetrahydrofolate</text>
        <dbReference type="Rhea" id="RHEA:11824"/>
        <dbReference type="ChEBI" id="CHEBI:11561"/>
        <dbReference type="ChEBI" id="CHEBI:11851"/>
        <dbReference type="ChEBI" id="CHEBI:15377"/>
        <dbReference type="ChEBI" id="CHEBI:15636"/>
        <dbReference type="ChEBI" id="CHEBI:57453"/>
        <dbReference type="EC" id="2.1.2.11"/>
    </reaction>
</comment>
<comment type="cofactor">
    <cofactor evidence="1">
        <name>Mg(2+)</name>
        <dbReference type="ChEBI" id="CHEBI:18420"/>
    </cofactor>
    <text evidence="1">Binds 1 Mg(2+) ion per subunit.</text>
</comment>
<comment type="pathway">
    <text evidence="1">Cofactor biosynthesis; (R)-pantothenate biosynthesis; (R)-pantoate from 3-methyl-2-oxobutanoate: step 1/2.</text>
</comment>
<comment type="subunit">
    <text evidence="1">Homodecamer; pentamer of dimers.</text>
</comment>
<comment type="subcellular location">
    <subcellularLocation>
        <location evidence="1">Cytoplasm</location>
    </subcellularLocation>
</comment>
<comment type="similarity">
    <text evidence="1">Belongs to the PanB family.</text>
</comment>